<comment type="function">
    <text evidence="3 4 5 8">Required for efficient mating. Plays a role in maintenance of cell wall integrity during mating. Important for mating cell projection shape and conjugation bridge diameter. Plays a role in cell fusion and nuclear migration.</text>
</comment>
<comment type="subcellular location">
    <subcellularLocation>
        <location evidence="3 7 8">Secreted</location>
        <location evidence="3 7 8">Cell wall</location>
    </subcellularLocation>
    <subcellularLocation>
        <location evidence="9">Membrane</location>
        <topology evidence="9">Lipid-anchor</topology>
        <topology evidence="9">GPI-anchor</topology>
    </subcellularLocation>
    <text>Periphery of the mating cells. Localized to the mating projection.</text>
</comment>
<comment type="induction">
    <text evidence="3 5 8">By mating pheromones. By cells of the opposite mating type.</text>
</comment>
<comment type="PTM">
    <text evidence="6">N-glycosylated.</text>
</comment>
<organism>
    <name type="scientific">Saccharomyces cerevisiae (strain ATCC 204508 / S288c)</name>
    <name type="common">Baker's yeast</name>
    <dbReference type="NCBI Taxonomy" id="559292"/>
    <lineage>
        <taxon>Eukaryota</taxon>
        <taxon>Fungi</taxon>
        <taxon>Dikarya</taxon>
        <taxon>Ascomycota</taxon>
        <taxon>Saccharomycotina</taxon>
        <taxon>Saccharomycetes</taxon>
        <taxon>Saccharomycetales</taxon>
        <taxon>Saccharomycetaceae</taxon>
        <taxon>Saccharomyces</taxon>
    </lineage>
</organism>
<keyword id="KW-0130">Cell adhesion</keyword>
<keyword id="KW-0133">Cell shape</keyword>
<keyword id="KW-0134">Cell wall</keyword>
<keyword id="KW-0961">Cell wall biogenesis/degradation</keyword>
<keyword id="KW-0184">Conjugation</keyword>
<keyword id="KW-0325">Glycoprotein</keyword>
<keyword id="KW-0336">GPI-anchor</keyword>
<keyword id="KW-0449">Lipoprotein</keyword>
<keyword id="KW-0472">Membrane</keyword>
<keyword id="KW-0589">Pheromone response</keyword>
<keyword id="KW-1185">Reference proteome</keyword>
<keyword id="KW-0964">Secreted</keyword>
<keyword id="KW-0732">Signal</keyword>
<name>FIG2_YEAST</name>
<dbReference type="EMBL" id="X59720">
    <property type="protein sequence ID" value="CAA42254.2"/>
    <property type="molecule type" value="Genomic_DNA"/>
</dbReference>
<dbReference type="EMBL" id="BK006937">
    <property type="protein sequence ID" value="DAA07558.1"/>
    <property type="molecule type" value="Genomic_DNA"/>
</dbReference>
<dbReference type="PIR" id="S25345">
    <property type="entry name" value="S25345"/>
</dbReference>
<dbReference type="RefSeq" id="NP_010013.2">
    <property type="nucleotide sequence ID" value="NM_001178795.1"/>
</dbReference>
<dbReference type="BioGRID" id="31061">
    <property type="interactions" value="85"/>
</dbReference>
<dbReference type="FunCoup" id="P25653">
    <property type="interactions" value="103"/>
</dbReference>
<dbReference type="IntAct" id="P25653">
    <property type="interactions" value="1"/>
</dbReference>
<dbReference type="MINT" id="P25653"/>
<dbReference type="STRING" id="4932.YCR089W"/>
<dbReference type="GlyCosmos" id="P25653">
    <property type="glycosylation" value="15 sites, No reported glycans"/>
</dbReference>
<dbReference type="GlyGen" id="P25653">
    <property type="glycosylation" value="16 sites"/>
</dbReference>
<dbReference type="PaxDb" id="4932-YCR089W"/>
<dbReference type="EnsemblFungi" id="YCR089W_mRNA">
    <property type="protein sequence ID" value="YCR089W"/>
    <property type="gene ID" value="YCR089W"/>
</dbReference>
<dbReference type="GeneID" id="850451"/>
<dbReference type="KEGG" id="sce:YCR089W"/>
<dbReference type="AGR" id="SGD:S000000685"/>
<dbReference type="SGD" id="S000000685">
    <property type="gene designation" value="FIG2"/>
</dbReference>
<dbReference type="VEuPathDB" id="FungiDB:YCR089W"/>
<dbReference type="eggNOG" id="ENOG502S8X9">
    <property type="taxonomic scope" value="Eukaryota"/>
</dbReference>
<dbReference type="HOGENOM" id="CLU_244733_0_0_1"/>
<dbReference type="InParanoid" id="P25653"/>
<dbReference type="OMA" id="SYDVDNP"/>
<dbReference type="OrthoDB" id="4068539at2759"/>
<dbReference type="BioCyc" id="YEAST:G3O-29383-MONOMER"/>
<dbReference type="BioGRID-ORCS" id="850451">
    <property type="hits" value="0 hits in 10 CRISPR screens"/>
</dbReference>
<dbReference type="PRO" id="PR:P25653"/>
<dbReference type="Proteomes" id="UP000002311">
    <property type="component" value="Chromosome III"/>
</dbReference>
<dbReference type="RNAct" id="P25653">
    <property type="molecule type" value="protein"/>
</dbReference>
<dbReference type="GO" id="GO:0071944">
    <property type="term" value="C:cell periphery"/>
    <property type="evidence" value="ECO:0007005"/>
    <property type="project" value="SGD"/>
</dbReference>
<dbReference type="GO" id="GO:0005576">
    <property type="term" value="C:extracellular region"/>
    <property type="evidence" value="ECO:0007669"/>
    <property type="project" value="UniProtKB-KW"/>
</dbReference>
<dbReference type="GO" id="GO:0009277">
    <property type="term" value="C:fungal-type cell wall"/>
    <property type="evidence" value="ECO:0000314"/>
    <property type="project" value="UniProtKB"/>
</dbReference>
<dbReference type="GO" id="GO:0005937">
    <property type="term" value="C:mating projection"/>
    <property type="evidence" value="ECO:0000314"/>
    <property type="project" value="SGD"/>
</dbReference>
<dbReference type="GO" id="GO:0098552">
    <property type="term" value="C:side of membrane"/>
    <property type="evidence" value="ECO:0007669"/>
    <property type="project" value="UniProtKB-KW"/>
</dbReference>
<dbReference type="GO" id="GO:0007155">
    <property type="term" value="P:cell adhesion"/>
    <property type="evidence" value="ECO:0007669"/>
    <property type="project" value="UniProtKB-KW"/>
</dbReference>
<dbReference type="GO" id="GO:0000753">
    <property type="term" value="P:cell morphogenesis involved in conjugation with cellular fusion"/>
    <property type="evidence" value="ECO:0000315"/>
    <property type="project" value="UniProtKB"/>
</dbReference>
<dbReference type="GO" id="GO:0071555">
    <property type="term" value="P:cell wall organization"/>
    <property type="evidence" value="ECO:0007669"/>
    <property type="project" value="UniProtKB-KW"/>
</dbReference>
<dbReference type="GO" id="GO:0000755">
    <property type="term" value="P:cytogamy"/>
    <property type="evidence" value="ECO:0000315"/>
    <property type="project" value="UniProtKB"/>
</dbReference>
<dbReference type="GO" id="GO:0044182">
    <property type="term" value="P:filamentous growth of a population of unicellular organisms"/>
    <property type="evidence" value="ECO:0000315"/>
    <property type="project" value="SGD"/>
</dbReference>
<dbReference type="GO" id="GO:0001403">
    <property type="term" value="P:invasive growth in response to glucose limitation"/>
    <property type="evidence" value="ECO:0000315"/>
    <property type="project" value="SGD"/>
</dbReference>
<dbReference type="GO" id="GO:0008360">
    <property type="term" value="P:regulation of cell shape"/>
    <property type="evidence" value="ECO:0007669"/>
    <property type="project" value="UniProtKB-KW"/>
</dbReference>
<dbReference type="GO" id="GO:0019236">
    <property type="term" value="P:response to pheromone"/>
    <property type="evidence" value="ECO:0007669"/>
    <property type="project" value="UniProtKB-KW"/>
</dbReference>
<dbReference type="InterPro" id="IPR025928">
    <property type="entry name" value="Flocculin_t3_rpt"/>
</dbReference>
<dbReference type="Pfam" id="PF13928">
    <property type="entry name" value="Flocculin_t3"/>
    <property type="match status" value="5"/>
</dbReference>
<protein>
    <recommendedName>
        <fullName>Factor-induced gene 2 protein</fullName>
    </recommendedName>
    <alternativeName>
        <fullName>Cell wall adhesin FIG2</fullName>
    </alternativeName>
</protein>
<sequence length="1609" mass="166036">MNSFASLGLIYSVVNLLTRVEAQIVFYQNSSTSLPVPTLVSTSIADFHESSSTGEVQYSSSYSYVQPSIDSFTSSSFLTSFEAPTETSSSYAVSSSLITSDTFSSYSDIFDEETSSLISTSAASSEKASSTLSSTAQPHRTSHSSSSFELPVTAPSSSSLPSSTSLTFTSVNPSQSWTSFNSEKSSALSSTIDFTSSEISGSTSPKSLESFDTTGTITSSYSPSPSSKNSNQTSLLSPLEPLSSSSGDLILSSTIQATTNDQTSKTIPTLVDATSSLPPTLRSSSMAPTSGSDSISHNFTSPPSKTSGNYDVLTSNSIDPSLFTTTSEYSSTQLSSLNRASKSETVNFTASIASTPFGTDSATSLIDPISSVGSTASSFVGISTANFSTQGNSNYVPESTASGSSQYQDWSSSSLPLSQTTWVVINTTNTQGSVTSTTSPAYVSTATKTVDGVITEYVTWCPLTQTKSQAIGVSSSISSVPQASSFSGSSILSSNSSTLAASNNVPESTASGSSQYQDWSSSSLPLSQTTWVVINTTNTQGSVTSTTSPAYVSTATKTVDGVITEYVTWCPLTQTKSQAIGISSSTISATQTSKPSSILTLGISTLQLSDATFKGTETINTHLMTESTSITEPTYFSGTSDSFYLCTSEVNLASSLSSYPNFSSSEGSTATITNSTVTFGSTSKYPSTSVSNPTEASQHVSSSVNSLTDFTSNSTETIAVISNIHKTSSNKDYSLTTTQLKTSGMQTLVLSTVTTTVNGAATEYTTWCPASSIAYTTSISYKTLVLTTEVCSHSECTPTVITSVTATSSTIPLLSTSSSTVLSSTVSEGAKNPAASEVTINTQVSATSEATSTSTQVSATSATATASESSTTSQVSTASETISTLGTQNFTTTGSLLFPALSTEMINTTVVSRKTLIISTEVCSHSKCVPTVITEVVTSKGTPSNGHSSQTLQTEAVEVTLSSHQTVTMSTEVCSNSICTPTVITSVQMRSTPFPYLTSSTSSSSLASTKKSSLEASSEMSTFSVSTQSLPLAFTSSEKRSTTSVSQWSNTVLTNTIMSSSSNVISTNEKPSSTTSPYNFSSGYSLPSSSTPSQYSLSTATTTINGIKTVYTTWCPLAEKSTVAASSQSSRSVDRFVSSSKPSSSLSQTSIQYTLSTATTTISGLKTVYTTWCPLTSKSTLGATTQTSSTAKVRITSASSATSTSISLSTSTESESSSGYLSKGVCSGTECTQDVPTQSSSPASTLAYSPSVSTSSSSSFSTTTASTLTSTHTSVPLLPSSSSISASSPSSTSLLSTSLPSPAFTSSTLPTATAVSSSTFIASSLPLSSKSSLSLSPVSSSILMSQFSSSSSSSSSLASLPSLSISPTVDTVSVLQPTTSIATLTCTDSQCQQEVSTICNGSNCDDVTSTATTPPSTVTDTMTCTGSECQKTTSSSCDGYSCKVSETYKSSATISACSGEGCQASATSELNSQYVTMTSVITPSAITTTSVEVHSTESTISITTVKPVTYTSSDTNGELITITSSSQTVIPSVTTIITRTKVAITSAPKPTTTTYVEQRLSSSGIATSFVAAASSTWITTPIVSTYAGSASKFLCSKFFMIMVMVINFI</sequence>
<evidence type="ECO:0000255" key="1"/>
<evidence type="ECO:0000256" key="2">
    <source>
        <dbReference type="SAM" id="MobiDB-lite"/>
    </source>
</evidence>
<evidence type="ECO:0000269" key="3">
    <source>
    </source>
</evidence>
<evidence type="ECO:0000269" key="4">
    <source>
    </source>
</evidence>
<evidence type="ECO:0000269" key="5">
    <source>
    </source>
</evidence>
<evidence type="ECO:0000269" key="6">
    <source>
    </source>
</evidence>
<evidence type="ECO:0000269" key="7">
    <source>
    </source>
</evidence>
<evidence type="ECO:0000269" key="8">
    <source>
    </source>
</evidence>
<evidence type="ECO:0000305" key="9"/>
<proteinExistence type="evidence at protein level"/>
<gene>
    <name type="primary">FIG2</name>
    <name type="ordered locus">YCR089W</name>
    <name type="ORF">YCR1102</name>
    <name type="ORF">YCR89W</name>
</gene>
<reference key="1">
    <citation type="journal article" date="1992" name="Yeast">
        <title>The complete sequence of a 6146 bp fragment of Saccharomyces cerevisiae chromosome III contains two new open reading frames.</title>
        <authorList>
            <person name="Wilson C."/>
            <person name="Grisanti P."/>
            <person name="Frontali L."/>
        </authorList>
    </citation>
    <scope>NUCLEOTIDE SEQUENCE [GENOMIC DNA]</scope>
</reference>
<reference key="2">
    <citation type="journal article" date="1992" name="Nature">
        <title>The complete DNA sequence of yeast chromosome III.</title>
        <authorList>
            <person name="Oliver S.G."/>
            <person name="van der Aart Q.J.M."/>
            <person name="Agostoni-Carbone M.L."/>
            <person name="Aigle M."/>
            <person name="Alberghina L."/>
            <person name="Alexandraki D."/>
            <person name="Antoine G."/>
            <person name="Anwar R."/>
            <person name="Ballesta J.P.G."/>
            <person name="Benit P."/>
            <person name="Berben G."/>
            <person name="Bergantino E."/>
            <person name="Biteau N."/>
            <person name="Bolle P.-A."/>
            <person name="Bolotin-Fukuhara M."/>
            <person name="Brown A."/>
            <person name="Brown A.J.P."/>
            <person name="Buhler J.-M."/>
            <person name="Carcano C."/>
            <person name="Carignani G."/>
            <person name="Cederberg H."/>
            <person name="Chanet R."/>
            <person name="Contreras R."/>
            <person name="Crouzet M."/>
            <person name="Daignan-Fornier B."/>
            <person name="Defoor E."/>
            <person name="Delgado M.D."/>
            <person name="Demolder J."/>
            <person name="Doira C."/>
            <person name="Dubois E."/>
            <person name="Dujon B."/>
            <person name="Duesterhoeft A."/>
            <person name="Erdmann D."/>
            <person name="Esteban M."/>
            <person name="Fabre F."/>
            <person name="Fairhead C."/>
            <person name="Faye G."/>
            <person name="Feldmann H."/>
            <person name="Fiers W."/>
            <person name="Francingues-Gaillard M.-C."/>
            <person name="Franco L."/>
            <person name="Frontali L."/>
            <person name="Fukuhara H."/>
            <person name="Fuller L.J."/>
            <person name="Galland P."/>
            <person name="Gent M.E."/>
            <person name="Gigot D."/>
            <person name="Gilliquet V."/>
            <person name="Glansdorff N."/>
            <person name="Goffeau A."/>
            <person name="Grenson M."/>
            <person name="Grisanti P."/>
            <person name="Grivell L.A."/>
            <person name="de Haan M."/>
            <person name="Haasemann M."/>
            <person name="Hatat D."/>
            <person name="Hoenicka J."/>
            <person name="Hegemann J.H."/>
            <person name="Herbert C.J."/>
            <person name="Hilger F."/>
            <person name="Hohmann S."/>
            <person name="Hollenberg C.P."/>
            <person name="Huse K."/>
            <person name="Iborra F."/>
            <person name="Indge K.J."/>
            <person name="Isono K."/>
            <person name="Jacq C."/>
            <person name="Jacquet M."/>
            <person name="James C.M."/>
            <person name="Jauniaux J.-C."/>
            <person name="Jia Y."/>
            <person name="Jimenez A."/>
            <person name="Kelly A."/>
            <person name="Kleinhans U."/>
            <person name="Kreisl P."/>
            <person name="Lanfranchi G."/>
            <person name="Lewis C."/>
            <person name="van der Linden C.G."/>
            <person name="Lucchini G."/>
            <person name="Lutzenkirchen K."/>
            <person name="Maat M.J."/>
            <person name="Mallet L."/>
            <person name="Mannhaupt G."/>
            <person name="Martegani E."/>
            <person name="Mathieu A."/>
            <person name="Maurer C.T.C."/>
            <person name="McConnell D."/>
            <person name="McKee R.A."/>
            <person name="Messenguy F."/>
            <person name="Mewes H.-W."/>
            <person name="Molemans F."/>
            <person name="Montague M.A."/>
            <person name="Muzi Falconi M."/>
            <person name="Navas L."/>
            <person name="Newlon C.S."/>
            <person name="Noone D."/>
            <person name="Pallier C."/>
            <person name="Panzeri L."/>
            <person name="Pearson B.M."/>
            <person name="Perea J."/>
            <person name="Philippsen P."/>
            <person name="Pierard A."/>
            <person name="Planta R.J."/>
            <person name="Plevani P."/>
            <person name="Poetsch B."/>
            <person name="Pohl F.M."/>
            <person name="Purnelle B."/>
            <person name="Ramezani Rad M."/>
            <person name="Rasmussen S.W."/>
            <person name="Raynal A."/>
            <person name="Remacha M.A."/>
            <person name="Richterich P."/>
            <person name="Roberts A.B."/>
            <person name="Rodriguez F."/>
            <person name="Sanz E."/>
            <person name="Schaaff-Gerstenschlaeger I."/>
            <person name="Scherens B."/>
            <person name="Schweitzer B."/>
            <person name="Shu Y."/>
            <person name="Skala J."/>
            <person name="Slonimski P.P."/>
            <person name="Sor F."/>
            <person name="Soustelle C."/>
            <person name="Spiegelberg R."/>
            <person name="Stateva L.I."/>
            <person name="Steensma H.Y."/>
            <person name="Steiner S."/>
            <person name="Thierry A."/>
            <person name="Thireos G."/>
            <person name="Tzermia M."/>
            <person name="Urrestarazu L.A."/>
            <person name="Valle G."/>
            <person name="Vetter I."/>
            <person name="van Vliet-Reedijk J.C."/>
            <person name="Voet M."/>
            <person name="Volckaert G."/>
            <person name="Vreken P."/>
            <person name="Wang H."/>
            <person name="Warmington J.R."/>
            <person name="von Wettstein D."/>
            <person name="Wicksteed B.L."/>
            <person name="Wilson C."/>
            <person name="Wurst H."/>
            <person name="Xu G."/>
            <person name="Yoshikawa A."/>
            <person name="Zimmermann F.K."/>
            <person name="Sgouros J.G."/>
        </authorList>
    </citation>
    <scope>NUCLEOTIDE SEQUENCE [LARGE SCALE GENOMIC DNA]</scope>
    <source>
        <strain>ATCC 204508 / S288c</strain>
    </source>
</reference>
<reference key="3">
    <citation type="submission" date="2001-06" db="EMBL/GenBank/DDBJ databases">
        <authorList>
            <person name="Valles G."/>
            <person name="Volckaerts G."/>
        </authorList>
    </citation>
    <scope>SEQUENCE REVISION TO 745 AND 1036</scope>
</reference>
<reference key="4">
    <citation type="journal article" date="2014" name="G3 (Bethesda)">
        <title>The reference genome sequence of Saccharomyces cerevisiae: Then and now.</title>
        <authorList>
            <person name="Engel S.R."/>
            <person name="Dietrich F.S."/>
            <person name="Fisk D.G."/>
            <person name="Binkley G."/>
            <person name="Balakrishnan R."/>
            <person name="Costanzo M.C."/>
            <person name="Dwight S.S."/>
            <person name="Hitz B.C."/>
            <person name="Karra K."/>
            <person name="Nash R.S."/>
            <person name="Weng S."/>
            <person name="Wong E.D."/>
            <person name="Lloyd P."/>
            <person name="Skrzypek M.S."/>
            <person name="Miyasato S.R."/>
            <person name="Simison M."/>
            <person name="Cherry J.M."/>
        </authorList>
    </citation>
    <scope>GENOME REANNOTATION</scope>
    <source>
        <strain>ATCC 204508 / S288c</strain>
    </source>
</reference>
<reference key="5">
    <citation type="journal article" date="1997" name="Appl. Environ. Microbiol.">
        <title>Comparison of cell wall proteins of Saccharomyces cerevisiae as anchors for cell surface expression of heterologous proteins.</title>
        <authorList>
            <person name="Van der Vaart J.M."/>
            <person name="te Biesebeke R."/>
            <person name="Chapman J.W."/>
            <person name="Toschka H.Y."/>
            <person name="Klis F.M."/>
            <person name="Verrips C.T."/>
        </authorList>
    </citation>
    <scope>SUBCELLULAR LOCATION</scope>
</reference>
<reference key="6">
    <citation type="journal article" date="1998" name="J. Cell Biol.">
        <title>Pheromone-regulated genes required for yeast mating differentiation.</title>
        <authorList>
            <person name="Erdman S."/>
            <person name="Lin L."/>
            <person name="Malczynski M."/>
            <person name="Snyder M."/>
        </authorList>
    </citation>
    <scope>FUNCTION</scope>
    <scope>SUBCELLULAR LOCATION</scope>
    <scope>INDUCTION</scope>
</reference>
<reference key="7">
    <citation type="journal article" date="2000" name="Proc. Natl. Acad. Sci. U.S.A.">
        <title>A Saccharomyces gene family involved in invasive growth, cell-cell adhesion, and mating.</title>
        <authorList>
            <person name="Guo B."/>
            <person name="Styles C.A."/>
            <person name="Feng Q."/>
            <person name="Fink G.R."/>
        </authorList>
    </citation>
    <scope>FUNCTION</scope>
    <scope>SUBCELLULAR LOCATION</scope>
    <scope>INDUCTION</scope>
</reference>
<reference key="8">
    <citation type="journal article" date="2002" name="Eukaryot. Cell">
        <title>Maintenance of mating cell integrity requires the adhesin Fig2p.</title>
        <authorList>
            <person name="Zhang M."/>
            <person name="Bennett D."/>
            <person name="Erdman S.E."/>
        </authorList>
    </citation>
    <scope>FUNCTION</scope>
</reference>
<reference key="9">
    <citation type="journal article" date="2002" name="Eukaryot. Cell">
        <title>Role of Fig2p in agglutination in Saccharomyces cerevisiae.</title>
        <authorList>
            <person name="Jue C.K."/>
            <person name="Lipke P.N."/>
        </authorList>
    </citation>
    <scope>FUNCTION</scope>
    <scope>INDUCTION</scope>
</reference>
<reference key="10">
    <citation type="journal article" date="2009" name="Mol. Syst. Biol.">
        <title>Global analysis of the glycoproteome in Saccharomyces cerevisiae reveals new roles for protein glycosylation in eukaryotes.</title>
        <authorList>
            <person name="Kung L.A."/>
            <person name="Tao S.-C."/>
            <person name="Qian J."/>
            <person name="Smith M.G."/>
            <person name="Snyder M."/>
            <person name="Zhu H."/>
        </authorList>
    </citation>
    <scope>GLYCOSYLATION [LARGE SCALE ANALYSIS]</scope>
</reference>
<feature type="signal peptide" evidence="1">
    <location>
        <begin position="1"/>
        <end position="22"/>
    </location>
</feature>
<feature type="chain" id="PRO_0000021264" description="Factor-induced gene 2 protein">
    <location>
        <begin position="23"/>
        <end position="1588"/>
    </location>
</feature>
<feature type="propeptide" id="PRO_0000372452" description="Removed in mature form" evidence="1">
    <location>
        <begin position="1589"/>
        <end position="1609"/>
    </location>
</feature>
<feature type="region of interest" description="Disordered" evidence="2">
    <location>
        <begin position="129"/>
        <end position="165"/>
    </location>
</feature>
<feature type="region of interest" description="Disordered" evidence="2">
    <location>
        <begin position="196"/>
        <end position="243"/>
    </location>
</feature>
<feature type="region of interest" description="Disordered" evidence="2">
    <location>
        <begin position="266"/>
        <end position="312"/>
    </location>
</feature>
<feature type="region of interest" description="Disordered" evidence="2">
    <location>
        <begin position="846"/>
        <end position="876"/>
    </location>
</feature>
<feature type="region of interest" description="Disordered" evidence="2">
    <location>
        <begin position="1231"/>
        <end position="1259"/>
    </location>
</feature>
<feature type="compositionally biased region" description="Polar residues" evidence="2">
    <location>
        <begin position="137"/>
        <end position="148"/>
    </location>
</feature>
<feature type="compositionally biased region" description="Low complexity" evidence="2">
    <location>
        <begin position="150"/>
        <end position="165"/>
    </location>
</feature>
<feature type="compositionally biased region" description="Polar residues" evidence="2">
    <location>
        <begin position="196"/>
        <end position="212"/>
    </location>
</feature>
<feature type="compositionally biased region" description="Low complexity" evidence="2">
    <location>
        <begin position="213"/>
        <end position="243"/>
    </location>
</feature>
<feature type="compositionally biased region" description="Low complexity" evidence="2">
    <location>
        <begin position="274"/>
        <end position="285"/>
    </location>
</feature>
<feature type="compositionally biased region" description="Polar residues" evidence="2">
    <location>
        <begin position="286"/>
        <end position="312"/>
    </location>
</feature>
<feature type="compositionally biased region" description="Polar residues" evidence="2">
    <location>
        <begin position="1231"/>
        <end position="1243"/>
    </location>
</feature>
<feature type="compositionally biased region" description="Low complexity" evidence="2">
    <location>
        <begin position="1244"/>
        <end position="1259"/>
    </location>
</feature>
<feature type="lipid moiety-binding region" description="GPI-anchor amidated glycine" evidence="1">
    <location>
        <position position="1588"/>
    </location>
</feature>
<feature type="glycosylation site" description="N-linked (GlcNAc...) asparagine" evidence="1">
    <location>
        <position position="29"/>
    </location>
</feature>
<feature type="glycosylation site" description="N-linked (GlcNAc...) asparagine" evidence="1">
    <location>
        <position position="231"/>
    </location>
</feature>
<feature type="glycosylation site" description="N-linked (GlcNAc...) asparagine" evidence="1">
    <location>
        <position position="298"/>
    </location>
</feature>
<feature type="glycosylation site" description="N-linked (GlcNAc...) asparagine" evidence="1">
    <location>
        <position position="347"/>
    </location>
</feature>
<feature type="glycosylation site" description="N-linked (GlcNAc...) asparagine" evidence="1">
    <location>
        <position position="386"/>
    </location>
</feature>
<feature type="glycosylation site" description="N-linked (GlcNAc...) asparagine" evidence="1">
    <location>
        <position position="426"/>
    </location>
</feature>
<feature type="glycosylation site" description="N-linked (GlcNAc...) asparagine" evidence="1">
    <location>
        <position position="495"/>
    </location>
</feature>
<feature type="glycosylation site" description="N-linked (GlcNAc...) asparagine" evidence="1">
    <location>
        <position position="535"/>
    </location>
</feature>
<feature type="glycosylation site" description="N-linked (GlcNAc...) asparagine" evidence="1">
    <location>
        <position position="661"/>
    </location>
</feature>
<feature type="glycosylation site" description="N-linked (GlcNAc...) asparagine" evidence="1">
    <location>
        <position position="674"/>
    </location>
</feature>
<feature type="glycosylation site" description="N-linked (GlcNAc...) asparagine" evidence="1">
    <location>
        <position position="713"/>
    </location>
</feature>
<feature type="glycosylation site" description="N-linked (GlcNAc...) asparagine" evidence="1">
    <location>
        <position position="889"/>
    </location>
</feature>
<feature type="glycosylation site" description="N-linked (GlcNAc...) asparagine" evidence="1">
    <location>
        <position position="907"/>
    </location>
</feature>
<feature type="glycosylation site" description="N-linked (GlcNAc...) asparagine" evidence="1">
    <location>
        <position position="1079"/>
    </location>
</feature>
<feature type="glycosylation site" description="N-linked (GlcNAc...) asparagine" evidence="1">
    <location>
        <position position="1400"/>
    </location>
</feature>
<accession>P25653</accession>
<accession>D6VR89</accession>